<evidence type="ECO:0000255" key="1">
    <source>
        <dbReference type="HAMAP-Rule" id="MF_01656"/>
    </source>
</evidence>
<reference key="1">
    <citation type="submission" date="2007-10" db="EMBL/GenBank/DDBJ databases">
        <title>Complete sequence of Shewanella pealeana ATCC 700345.</title>
        <authorList>
            <consortium name="US DOE Joint Genome Institute"/>
            <person name="Copeland A."/>
            <person name="Lucas S."/>
            <person name="Lapidus A."/>
            <person name="Barry K."/>
            <person name="Glavina del Rio T."/>
            <person name="Dalin E."/>
            <person name="Tice H."/>
            <person name="Pitluck S."/>
            <person name="Chertkov O."/>
            <person name="Brettin T."/>
            <person name="Bruce D."/>
            <person name="Detter J.C."/>
            <person name="Han C."/>
            <person name="Schmutz J."/>
            <person name="Larimer F."/>
            <person name="Land M."/>
            <person name="Hauser L."/>
            <person name="Kyrpides N."/>
            <person name="Kim E."/>
            <person name="Zhao J.-S.Z."/>
            <person name="Manno D."/>
            <person name="Hawari J."/>
            <person name="Richardson P."/>
        </authorList>
    </citation>
    <scope>NUCLEOTIDE SEQUENCE [LARGE SCALE GENOMIC DNA]</scope>
    <source>
        <strain>ATCC 700345 / ANG-SQ1</strain>
    </source>
</reference>
<accession>A8H4E9</accession>
<name>HOA_SHEPA</name>
<feature type="chain" id="PRO_0000387916" description="4-hydroxy-2-oxovalerate aldolase">
    <location>
        <begin position="1"/>
        <end position="340"/>
    </location>
</feature>
<feature type="domain" description="Pyruvate carboxyltransferase" evidence="1">
    <location>
        <begin position="8"/>
        <end position="260"/>
    </location>
</feature>
<feature type="active site" description="Proton acceptor" evidence="1">
    <location>
        <position position="20"/>
    </location>
</feature>
<feature type="binding site" evidence="1">
    <location>
        <begin position="16"/>
        <end position="17"/>
    </location>
    <ligand>
        <name>substrate</name>
    </ligand>
</feature>
<feature type="binding site" evidence="1">
    <location>
        <position position="17"/>
    </location>
    <ligand>
        <name>Mn(2+)</name>
        <dbReference type="ChEBI" id="CHEBI:29035"/>
    </ligand>
</feature>
<feature type="binding site" evidence="1">
    <location>
        <position position="170"/>
    </location>
    <ligand>
        <name>substrate</name>
    </ligand>
</feature>
<feature type="binding site" evidence="1">
    <location>
        <position position="199"/>
    </location>
    <ligand>
        <name>Mn(2+)</name>
        <dbReference type="ChEBI" id="CHEBI:29035"/>
    </ligand>
</feature>
<feature type="binding site" evidence="1">
    <location>
        <position position="199"/>
    </location>
    <ligand>
        <name>substrate</name>
    </ligand>
</feature>
<feature type="binding site" evidence="1">
    <location>
        <position position="201"/>
    </location>
    <ligand>
        <name>Mn(2+)</name>
        <dbReference type="ChEBI" id="CHEBI:29035"/>
    </ligand>
</feature>
<feature type="binding site" evidence="1">
    <location>
        <position position="290"/>
    </location>
    <ligand>
        <name>substrate</name>
    </ligand>
</feature>
<feature type="site" description="Transition state stabilizer" evidence="1">
    <location>
        <position position="16"/>
    </location>
</feature>
<gene>
    <name type="ordered locus">Spea_2116</name>
</gene>
<dbReference type="EC" id="4.1.3.39" evidence="1"/>
<dbReference type="EMBL" id="CP000851">
    <property type="protein sequence ID" value="ABV87436.1"/>
    <property type="molecule type" value="Genomic_DNA"/>
</dbReference>
<dbReference type="RefSeq" id="WP_012155352.1">
    <property type="nucleotide sequence ID" value="NC_009901.1"/>
</dbReference>
<dbReference type="SMR" id="A8H4E9"/>
<dbReference type="STRING" id="398579.Spea_2116"/>
<dbReference type="KEGG" id="spl:Spea_2116"/>
<dbReference type="eggNOG" id="COG0119">
    <property type="taxonomic scope" value="Bacteria"/>
</dbReference>
<dbReference type="HOGENOM" id="CLU_049173_0_0_6"/>
<dbReference type="OrthoDB" id="9803573at2"/>
<dbReference type="Proteomes" id="UP000002608">
    <property type="component" value="Chromosome"/>
</dbReference>
<dbReference type="GO" id="GO:0003852">
    <property type="term" value="F:2-isopropylmalate synthase activity"/>
    <property type="evidence" value="ECO:0007669"/>
    <property type="project" value="TreeGrafter"/>
</dbReference>
<dbReference type="GO" id="GO:0008701">
    <property type="term" value="F:4-hydroxy-2-oxovalerate aldolase activity"/>
    <property type="evidence" value="ECO:0007669"/>
    <property type="project" value="UniProtKB-UniRule"/>
</dbReference>
<dbReference type="GO" id="GO:0030145">
    <property type="term" value="F:manganese ion binding"/>
    <property type="evidence" value="ECO:0007669"/>
    <property type="project" value="UniProtKB-UniRule"/>
</dbReference>
<dbReference type="GO" id="GO:0009056">
    <property type="term" value="P:catabolic process"/>
    <property type="evidence" value="ECO:0007669"/>
    <property type="project" value="UniProtKB-KW"/>
</dbReference>
<dbReference type="GO" id="GO:0009098">
    <property type="term" value="P:L-leucine biosynthetic process"/>
    <property type="evidence" value="ECO:0007669"/>
    <property type="project" value="TreeGrafter"/>
</dbReference>
<dbReference type="CDD" id="cd07943">
    <property type="entry name" value="DRE_TIM_HOA"/>
    <property type="match status" value="1"/>
</dbReference>
<dbReference type="Gene3D" id="1.10.8.60">
    <property type="match status" value="1"/>
</dbReference>
<dbReference type="Gene3D" id="3.20.20.70">
    <property type="entry name" value="Aldolase class I"/>
    <property type="match status" value="1"/>
</dbReference>
<dbReference type="HAMAP" id="MF_01656">
    <property type="entry name" value="HOA"/>
    <property type="match status" value="1"/>
</dbReference>
<dbReference type="InterPro" id="IPR050073">
    <property type="entry name" value="2-IPM_HCS-like"/>
</dbReference>
<dbReference type="InterPro" id="IPR017629">
    <property type="entry name" value="4OH_2_O-val_aldolase"/>
</dbReference>
<dbReference type="InterPro" id="IPR013785">
    <property type="entry name" value="Aldolase_TIM"/>
</dbReference>
<dbReference type="InterPro" id="IPR012425">
    <property type="entry name" value="DmpG_comm"/>
</dbReference>
<dbReference type="InterPro" id="IPR035685">
    <property type="entry name" value="DRE_TIM_HOA"/>
</dbReference>
<dbReference type="InterPro" id="IPR000891">
    <property type="entry name" value="PYR_CT"/>
</dbReference>
<dbReference type="NCBIfam" id="TIGR03217">
    <property type="entry name" value="4OH_2_O_val_ald"/>
    <property type="match status" value="1"/>
</dbReference>
<dbReference type="NCBIfam" id="NF006049">
    <property type="entry name" value="PRK08195.1"/>
    <property type="match status" value="1"/>
</dbReference>
<dbReference type="PANTHER" id="PTHR10277:SF9">
    <property type="entry name" value="2-ISOPROPYLMALATE SYNTHASE 1, CHLOROPLASTIC-RELATED"/>
    <property type="match status" value="1"/>
</dbReference>
<dbReference type="PANTHER" id="PTHR10277">
    <property type="entry name" value="HOMOCITRATE SYNTHASE-RELATED"/>
    <property type="match status" value="1"/>
</dbReference>
<dbReference type="Pfam" id="PF07836">
    <property type="entry name" value="DmpG_comm"/>
    <property type="match status" value="1"/>
</dbReference>
<dbReference type="Pfam" id="PF00682">
    <property type="entry name" value="HMGL-like"/>
    <property type="match status" value="1"/>
</dbReference>
<dbReference type="SUPFAM" id="SSF51569">
    <property type="entry name" value="Aldolase"/>
    <property type="match status" value="1"/>
</dbReference>
<dbReference type="SUPFAM" id="SSF89000">
    <property type="entry name" value="post-HMGL domain-like"/>
    <property type="match status" value="1"/>
</dbReference>
<dbReference type="PROSITE" id="PS50991">
    <property type="entry name" value="PYR_CT"/>
    <property type="match status" value="1"/>
</dbReference>
<protein>
    <recommendedName>
        <fullName evidence="1">4-hydroxy-2-oxovalerate aldolase</fullName>
        <shortName evidence="1">HOA</shortName>
        <ecNumber evidence="1">4.1.3.39</ecNumber>
    </recommendedName>
    <alternativeName>
        <fullName evidence="1">4-hydroxy-2-keto-pentanoic acid aldolase</fullName>
    </alternativeName>
    <alternativeName>
        <fullName evidence="1">4-hydroxy-2-oxopentanoate aldolase</fullName>
    </alternativeName>
</protein>
<sequence>MNLTGKKVILHDMSLRDGMHARQHQISLKEMVDVATGLDAAGVPLIEVTHGDGLGGASLNYGFPAHTDEEYLSAVIPKMKQAKVSALLLPGIGTGDHLRMAHDLGVNTIRVATHCTEADVSGQHISLSRELGLDTVGFLMMAHMVSPDKLLEQAKLMESYGANCIYCTDSAGYMLPGDVTSHIERLRGELKSDTQIGFHGHHNMGMSIANSLAAIQAGAERIDGSVAGLGAGAGNTPLEVFVAVLERMQVSHGINLYDIMDVAEDLVTPMMDQPIRIDRDALTLGYAGVYSSFLLFAQRAEKKHGIPARDILLELGRRGTVGGQEDMIDDTAMNMARERA</sequence>
<keyword id="KW-0058">Aromatic hydrocarbons catabolism</keyword>
<keyword id="KW-0456">Lyase</keyword>
<keyword id="KW-0464">Manganese</keyword>
<keyword id="KW-0479">Metal-binding</keyword>
<keyword id="KW-1185">Reference proteome</keyword>
<comment type="catalytic activity">
    <reaction evidence="1">
        <text>(S)-4-hydroxy-2-oxopentanoate = acetaldehyde + pyruvate</text>
        <dbReference type="Rhea" id="RHEA:22624"/>
        <dbReference type="ChEBI" id="CHEBI:15343"/>
        <dbReference type="ChEBI" id="CHEBI:15361"/>
        <dbReference type="ChEBI" id="CHEBI:73143"/>
        <dbReference type="EC" id="4.1.3.39"/>
    </reaction>
</comment>
<comment type="similarity">
    <text evidence="1">Belongs to the 4-hydroxy-2-oxovalerate aldolase family.</text>
</comment>
<organism>
    <name type="scientific">Shewanella pealeana (strain ATCC 700345 / ANG-SQ1)</name>
    <dbReference type="NCBI Taxonomy" id="398579"/>
    <lineage>
        <taxon>Bacteria</taxon>
        <taxon>Pseudomonadati</taxon>
        <taxon>Pseudomonadota</taxon>
        <taxon>Gammaproteobacteria</taxon>
        <taxon>Alteromonadales</taxon>
        <taxon>Shewanellaceae</taxon>
        <taxon>Shewanella</taxon>
    </lineage>
</organism>
<proteinExistence type="inferred from homology"/>